<keyword id="KW-0378">Hydrolase</keyword>
<keyword id="KW-0472">Membrane</keyword>
<keyword id="KW-0597">Phosphoprotein</keyword>
<keyword id="KW-1185">Reference proteome</keyword>
<keyword id="KW-0812">Transmembrane</keyword>
<keyword id="KW-1133">Transmembrane helix</keyword>
<keyword id="KW-0926">Vacuole</keyword>
<evidence type="ECO:0000255" key="1"/>
<evidence type="ECO:0000269" key="2">
    <source>
    </source>
</evidence>
<evidence type="ECO:0000269" key="3">
    <source>
    </source>
</evidence>
<evidence type="ECO:0000269" key="4">
    <source>
    </source>
</evidence>
<evidence type="ECO:0000269" key="5">
    <source>
    </source>
</evidence>
<evidence type="ECO:0000269" key="6">
    <source>
    </source>
</evidence>
<evidence type="ECO:0000269" key="7">
    <source>
    </source>
</evidence>
<evidence type="ECO:0000269" key="8">
    <source>
    </source>
</evidence>
<evidence type="ECO:0000269" key="9">
    <source>
    </source>
</evidence>
<evidence type="ECO:0000269" key="10">
    <source>
    </source>
</evidence>
<evidence type="ECO:0000269" key="11">
    <source>
    </source>
</evidence>
<evidence type="ECO:0000303" key="12">
    <source>
    </source>
</evidence>
<evidence type="ECO:0000303" key="13">
    <source>
    </source>
</evidence>
<evidence type="ECO:0000305" key="14"/>
<evidence type="ECO:0000305" key="15">
    <source>
    </source>
</evidence>
<evidence type="ECO:0000305" key="16">
    <source>
    </source>
</evidence>
<evidence type="ECO:0000305" key="17">
    <source>
    </source>
</evidence>
<evidence type="ECO:0007744" key="18">
    <source>
    </source>
</evidence>
<evidence type="ECO:0007744" key="19">
    <source>
    </source>
</evidence>
<evidence type="ECO:0007744" key="20">
    <source>
    </source>
</evidence>
<evidence type="ECO:0007744" key="21">
    <source>
    </source>
</evidence>
<feature type="chain" id="PRO_0000220918" description="Diacylglycerol pyrophosphate phosphatase 1">
    <location>
        <begin position="1"/>
        <end position="289"/>
    </location>
</feature>
<feature type="topological domain" description="Vacuolar" evidence="1">
    <location>
        <begin position="1"/>
        <end position="21"/>
    </location>
</feature>
<feature type="transmembrane region" description="Helical; Name=1" evidence="1">
    <location>
        <begin position="22"/>
        <end position="42"/>
    </location>
</feature>
<feature type="topological domain" description="Cytoplasmic" evidence="1">
    <location>
        <begin position="43"/>
        <end position="65"/>
    </location>
</feature>
<feature type="transmembrane region" description="Helical; Name=2" evidence="1">
    <location>
        <begin position="66"/>
        <end position="86"/>
    </location>
</feature>
<feature type="topological domain" description="Vacuolar" evidence="1">
    <location>
        <begin position="87"/>
        <end position="92"/>
    </location>
</feature>
<feature type="transmembrane region" description="Helical; Name=3" evidence="1">
    <location>
        <begin position="93"/>
        <end position="113"/>
    </location>
</feature>
<feature type="topological domain" description="Cytoplasmic" evidence="1">
    <location>
        <begin position="114"/>
        <end position="172"/>
    </location>
</feature>
<feature type="transmembrane region" description="Helical; Name=4" evidence="1">
    <location>
        <begin position="173"/>
        <end position="193"/>
    </location>
</feature>
<feature type="transmembrane region" description="Helical; Name=5" evidence="1">
    <location>
        <begin position="194"/>
        <end position="214"/>
    </location>
</feature>
<feature type="topological domain" description="Cytoplasmic" evidence="1">
    <location>
        <begin position="215"/>
        <end position="222"/>
    </location>
</feature>
<feature type="transmembrane region" description="Helical; Name=6" evidence="1">
    <location>
        <begin position="223"/>
        <end position="243"/>
    </location>
</feature>
<feature type="topological domain" description="Vacuolar" evidence="1">
    <location>
        <begin position="244"/>
        <end position="289"/>
    </location>
</feature>
<feature type="region of interest" description="Phosphatase sequence motif I">
    <location>
        <begin position="118"/>
        <end position="126"/>
    </location>
</feature>
<feature type="region of interest" description="Phosphatase sequence motif II">
    <location>
        <begin position="166"/>
        <end position="169"/>
    </location>
</feature>
<feature type="region of interest" description="Phosphatase sequence motif III">
    <location>
        <begin position="216"/>
        <end position="227"/>
    </location>
</feature>
<feature type="modified residue" description="Phosphoserine" evidence="18 19 20 21">
    <location>
        <position position="285"/>
    </location>
</feature>
<feature type="mutagenesis site" description="Complete loss of DGPP phosphatase activity." evidence="3">
    <original>R</original>
    <variation>A</variation>
    <location>
        <position position="125"/>
    </location>
</feature>
<feature type="mutagenesis site" description="91% decrease of DGPP phosphatase activity." evidence="3">
    <original>H</original>
    <variation>A</variation>
    <location>
        <position position="169"/>
    </location>
</feature>
<feature type="mutagenesis site" description="Complete loss of DGPP phosphatase activity." evidence="3">
    <original>H</original>
    <variation>A</variation>
    <location>
        <position position="223"/>
    </location>
</feature>
<reference key="1">
    <citation type="journal article" date="1997" name="Nature">
        <title>The nucleotide sequence of Saccharomyces cerevisiae chromosome IV.</title>
        <authorList>
            <person name="Jacq C."/>
            <person name="Alt-Moerbe J."/>
            <person name="Andre B."/>
            <person name="Arnold W."/>
            <person name="Bahr A."/>
            <person name="Ballesta J.P.G."/>
            <person name="Bargues M."/>
            <person name="Baron L."/>
            <person name="Becker A."/>
            <person name="Biteau N."/>
            <person name="Bloecker H."/>
            <person name="Blugeon C."/>
            <person name="Boskovic J."/>
            <person name="Brandt P."/>
            <person name="Brueckner M."/>
            <person name="Buitrago M.J."/>
            <person name="Coster F."/>
            <person name="Delaveau T."/>
            <person name="del Rey F."/>
            <person name="Dujon B."/>
            <person name="Eide L.G."/>
            <person name="Garcia-Cantalejo J.M."/>
            <person name="Goffeau A."/>
            <person name="Gomez-Peris A."/>
            <person name="Granotier C."/>
            <person name="Hanemann V."/>
            <person name="Hankeln T."/>
            <person name="Hoheisel J.D."/>
            <person name="Jaeger W."/>
            <person name="Jimenez A."/>
            <person name="Jonniaux J.-L."/>
            <person name="Kraemer C."/>
            <person name="Kuester H."/>
            <person name="Laamanen P."/>
            <person name="Legros Y."/>
            <person name="Louis E.J."/>
            <person name="Moeller-Rieker S."/>
            <person name="Monnet A."/>
            <person name="Moro M."/>
            <person name="Mueller-Auer S."/>
            <person name="Nussbaumer B."/>
            <person name="Paricio N."/>
            <person name="Paulin L."/>
            <person name="Perea J."/>
            <person name="Perez-Alonso M."/>
            <person name="Perez-Ortin J.E."/>
            <person name="Pohl T.M."/>
            <person name="Prydz H."/>
            <person name="Purnelle B."/>
            <person name="Rasmussen S.W."/>
            <person name="Remacha M.A."/>
            <person name="Revuelta J.L."/>
            <person name="Rieger M."/>
            <person name="Salom D."/>
            <person name="Saluz H.P."/>
            <person name="Saiz J.E."/>
            <person name="Saren A.-M."/>
            <person name="Schaefer M."/>
            <person name="Scharfe M."/>
            <person name="Schmidt E.R."/>
            <person name="Schneider C."/>
            <person name="Scholler P."/>
            <person name="Schwarz S."/>
            <person name="Soler-Mira A."/>
            <person name="Urrestarazu L.A."/>
            <person name="Verhasselt P."/>
            <person name="Vissers S."/>
            <person name="Voet M."/>
            <person name="Volckaert G."/>
            <person name="Wagner G."/>
            <person name="Wambutt R."/>
            <person name="Wedler E."/>
            <person name="Wedler H."/>
            <person name="Woelfl S."/>
            <person name="Harris D.E."/>
            <person name="Bowman S."/>
            <person name="Brown D."/>
            <person name="Churcher C.M."/>
            <person name="Connor R."/>
            <person name="Dedman K."/>
            <person name="Gentles S."/>
            <person name="Hamlin N."/>
            <person name="Hunt S."/>
            <person name="Jones L."/>
            <person name="McDonald S."/>
            <person name="Murphy L.D."/>
            <person name="Niblett D."/>
            <person name="Odell C."/>
            <person name="Oliver K."/>
            <person name="Rajandream M.A."/>
            <person name="Richards C."/>
            <person name="Shore L."/>
            <person name="Walsh S.V."/>
            <person name="Barrell B.G."/>
            <person name="Dietrich F.S."/>
            <person name="Mulligan J.T."/>
            <person name="Allen E."/>
            <person name="Araujo R."/>
            <person name="Aviles E."/>
            <person name="Berno A."/>
            <person name="Carpenter J."/>
            <person name="Chen E."/>
            <person name="Cherry J.M."/>
            <person name="Chung E."/>
            <person name="Duncan M."/>
            <person name="Hunicke-Smith S."/>
            <person name="Hyman R.W."/>
            <person name="Komp C."/>
            <person name="Lashkari D."/>
            <person name="Lew H."/>
            <person name="Lin D."/>
            <person name="Mosedale D."/>
            <person name="Nakahara K."/>
            <person name="Namath A."/>
            <person name="Oefner P."/>
            <person name="Oh C."/>
            <person name="Petel F.X."/>
            <person name="Roberts D."/>
            <person name="Schramm S."/>
            <person name="Schroeder M."/>
            <person name="Shogren T."/>
            <person name="Shroff N."/>
            <person name="Winant A."/>
            <person name="Yelton M.A."/>
            <person name="Botstein D."/>
            <person name="Davis R.W."/>
            <person name="Johnston M."/>
            <person name="Andrews S."/>
            <person name="Brinkman R."/>
            <person name="Cooper J."/>
            <person name="Ding H."/>
            <person name="Du Z."/>
            <person name="Favello A."/>
            <person name="Fulton L."/>
            <person name="Gattung S."/>
            <person name="Greco T."/>
            <person name="Hallsworth K."/>
            <person name="Hawkins J."/>
            <person name="Hillier L.W."/>
            <person name="Jier M."/>
            <person name="Johnson D."/>
            <person name="Johnston L."/>
            <person name="Kirsten J."/>
            <person name="Kucaba T."/>
            <person name="Langston Y."/>
            <person name="Latreille P."/>
            <person name="Le T."/>
            <person name="Mardis E."/>
            <person name="Menezes S."/>
            <person name="Miller N."/>
            <person name="Nhan M."/>
            <person name="Pauley A."/>
            <person name="Peluso D."/>
            <person name="Rifkin L."/>
            <person name="Riles L."/>
            <person name="Taich A."/>
            <person name="Trevaskis E."/>
            <person name="Vignati D."/>
            <person name="Wilcox L."/>
            <person name="Wohldman P."/>
            <person name="Vaudin M."/>
            <person name="Wilson R."/>
            <person name="Waterston R."/>
            <person name="Albermann K."/>
            <person name="Hani J."/>
            <person name="Heumann K."/>
            <person name="Kleine K."/>
            <person name="Mewes H.-W."/>
            <person name="Zollner A."/>
            <person name="Zaccaria P."/>
        </authorList>
    </citation>
    <scope>NUCLEOTIDE SEQUENCE [LARGE SCALE GENOMIC DNA]</scope>
    <source>
        <strain>ATCC 204508 / S288c</strain>
    </source>
</reference>
<reference key="2">
    <citation type="journal article" date="2014" name="G3 (Bethesda)">
        <title>The reference genome sequence of Saccharomyces cerevisiae: Then and now.</title>
        <authorList>
            <person name="Engel S.R."/>
            <person name="Dietrich F.S."/>
            <person name="Fisk D.G."/>
            <person name="Binkley G."/>
            <person name="Balakrishnan R."/>
            <person name="Costanzo M.C."/>
            <person name="Dwight S.S."/>
            <person name="Hitz B.C."/>
            <person name="Karra K."/>
            <person name="Nash R.S."/>
            <person name="Weng S."/>
            <person name="Wong E.D."/>
            <person name="Lloyd P."/>
            <person name="Skrzypek M.S."/>
            <person name="Miyasato S.R."/>
            <person name="Simison M."/>
            <person name="Cherry J.M."/>
        </authorList>
    </citation>
    <scope>GENOME REANNOTATION</scope>
    <source>
        <strain>ATCC 204508 / S288c</strain>
    </source>
</reference>
<reference key="3">
    <citation type="journal article" date="2007" name="Genome Res.">
        <title>Approaching a complete repository of sequence-verified protein-encoding clones for Saccharomyces cerevisiae.</title>
        <authorList>
            <person name="Hu Y."/>
            <person name="Rolfs A."/>
            <person name="Bhullar B."/>
            <person name="Murthy T.V.S."/>
            <person name="Zhu C."/>
            <person name="Berger M.F."/>
            <person name="Camargo A.A."/>
            <person name="Kelley F."/>
            <person name="McCarron S."/>
            <person name="Jepson D."/>
            <person name="Richardson A."/>
            <person name="Raphael J."/>
            <person name="Moreira D."/>
            <person name="Taycher E."/>
            <person name="Zuo D."/>
            <person name="Mohr S."/>
            <person name="Kane M.F."/>
            <person name="Williamson J."/>
            <person name="Simpson A.J.G."/>
            <person name="Bulyk M.L."/>
            <person name="Harlow E."/>
            <person name="Marsischky G."/>
            <person name="Kolodner R.D."/>
            <person name="LaBaer J."/>
        </authorList>
    </citation>
    <scope>NUCLEOTIDE SEQUENCE [GENOMIC DNA]</scope>
    <source>
        <strain>ATCC 204508 / S288c</strain>
    </source>
</reference>
<reference key="4">
    <citation type="journal article" date="1996" name="J. Biol. Chem.">
        <title>Purification and characterization of diacylglycerol pyrophosphate phosphatase from Saccharomyces cerevisiae.</title>
        <authorList>
            <person name="Wu W.-I."/>
            <person name="Liu Y."/>
            <person name="Riedel B."/>
            <person name="Wissing J.B."/>
            <person name="Fischl A.S."/>
            <person name="Carman G.M."/>
        </authorList>
    </citation>
    <scope>FUNCTION</scope>
    <scope>ACTIVITY REGULATION</scope>
    <scope>SUBCELLULAR LOCATION</scope>
    <scope>CATALYTIC ACTIVITY</scope>
</reference>
<reference key="5">
    <citation type="journal article" date="1996" name="J. Biol. Chem.">
        <title>The Escherichia coli pgpB gene encodes for a diacylglycerol pyrophosphate phosphatase activity.</title>
        <authorList>
            <person name="Dillon D.A."/>
            <person name="Wu W.I."/>
            <person name="Riedel B."/>
            <person name="Wissing J.B."/>
            <person name="Dowhan W."/>
            <person name="Carman G.M."/>
        </authorList>
    </citation>
    <scope>SUBSTRATE SPECIFICITY</scope>
    <scope>BIOPHYSICOCHEMICAL PROPERTIES</scope>
</reference>
<reference key="6">
    <citation type="journal article" date="1998" name="J. Biol. Chem.">
        <title>Isolation and characterization of the Saccharomyces cerevisiae DPP1 gene encoding diacylglycerol pyrophosphate phosphatase.</title>
        <authorList>
            <person name="Toke D.A."/>
            <person name="Bennett W.L."/>
            <person name="Dillon D.A."/>
            <person name="Wu W.I."/>
            <person name="Chen X."/>
            <person name="Ostrander D.B."/>
            <person name="Oshiro J."/>
            <person name="Cremesti A."/>
            <person name="Voelker D.R."/>
            <person name="Fischl A.S."/>
            <person name="Carman G.M."/>
        </authorList>
    </citation>
    <scope>FUNCTION</scope>
</reference>
<reference key="7">
    <citation type="journal article" date="1999" name="J. Biol. Chem.">
        <title>The LPP1 and DPP1 gene products account for most of the isoprenoid phosphate phosphatase activities in Saccharomyces cerevisiae.</title>
        <authorList>
            <person name="Faulkner A."/>
            <person name="Chen X."/>
            <person name="Rush J."/>
            <person name="Horazdovsky B."/>
            <person name="Waechter C.J."/>
            <person name="Carman G.M."/>
            <person name="Sternweis P.C."/>
        </authorList>
    </citation>
    <scope>FUNCTION</scope>
    <scope>CATALYTIC ACTIVITY</scope>
    <scope>BIOPHYSICOCHEMICAL PROPERTIES</scope>
</reference>
<reference key="8">
    <citation type="journal article" date="2001" name="J. Biol. Chem.">
        <title>Regulation of the Saccharomyces cerevisiae DPP1-encoded diacylglycerol pyrophosphate phosphatase by zinc.</title>
        <authorList>
            <person name="Han G.-S."/>
            <person name="Johnston C.N."/>
            <person name="Chen X."/>
            <person name="Athenstaedt K."/>
            <person name="Daum G."/>
            <person name="Carman G.M."/>
        </authorList>
    </citation>
    <scope>FUNCTION</scope>
    <scope>ACTIVITY REGULATION</scope>
    <scope>SUBCELLULAR LOCATION</scope>
    <scope>INDUCTION</scope>
</reference>
<reference key="9">
    <citation type="journal article" date="2003" name="J. Biol. Chem.">
        <title>Regulation of the yeast DPP1-encoded diacylglycerol pyrophosphate phosphatase by transcription factor Gis1p.</title>
        <authorList>
            <person name="Oshiro J."/>
            <person name="Han G.-S."/>
            <person name="Iwanyshyn W.M."/>
            <person name="Conover K."/>
            <person name="Carman G.M."/>
        </authorList>
    </citation>
    <scope>INDUCTION</scope>
</reference>
<reference key="10">
    <citation type="journal article" date="2004" name="J. Biol. Chem.">
        <title>Vacuole membrane topography of the DPP1-encoded diacylglycerol pyrophosphate phosphatase catalytic site from Saccharomyces cerevisiae.</title>
        <authorList>
            <person name="Han G.-S."/>
            <person name="Johnston C.N."/>
            <person name="Carman G.M."/>
        </authorList>
    </citation>
    <scope>TOPOLOGY</scope>
    <scope>PHOSPHATASE SEQUENCE MOTIF</scope>
</reference>
<reference key="11">
    <citation type="journal article" date="1999" name="Biochemistry">
        <title>Mutagenesis of the phosphatase sequence motif in diacylglycerol pyrophosphate phosphatase from Saccharomyces cerevisiae.</title>
        <authorList>
            <person name="Toke D.A."/>
            <person name="McClintick M.L."/>
            <person name="Carman G.M."/>
        </authorList>
    </citation>
    <scope>MUTAGENESIS OF ARG-125; HIS-169 AND HIS-223</scope>
</reference>
<reference key="12">
    <citation type="journal article" date="2003" name="Nature">
        <title>Global analysis of protein localization in budding yeast.</title>
        <authorList>
            <person name="Huh W.-K."/>
            <person name="Falvo J.V."/>
            <person name="Gerke L.C."/>
            <person name="Carroll A.S."/>
            <person name="Howson R.W."/>
            <person name="Weissman J.S."/>
            <person name="O'Shea E.K."/>
        </authorList>
    </citation>
    <scope>SUBCELLULAR LOCATION [LARGE SCALE ANALYSIS]</scope>
</reference>
<reference key="13">
    <citation type="journal article" date="2003" name="Nature">
        <title>Global analysis of protein expression in yeast.</title>
        <authorList>
            <person name="Ghaemmaghami S."/>
            <person name="Huh W.-K."/>
            <person name="Bower K."/>
            <person name="Howson R.W."/>
            <person name="Belle A."/>
            <person name="Dephoure N."/>
            <person name="O'Shea E.K."/>
            <person name="Weissman J.S."/>
        </authorList>
    </citation>
    <scope>LEVEL OF PROTEIN EXPRESSION [LARGE SCALE ANALYSIS]</scope>
</reference>
<reference key="14">
    <citation type="journal article" date="2003" name="Biochim. Biophys. Acta">
        <title>Diacylglycerol pyrophosphate phosphatase in Saccharomyces cerevisiae.</title>
        <authorList>
            <person name="Oshiro J."/>
            <person name="Han G.-S."/>
            <person name="Carman G.M."/>
        </authorList>
    </citation>
    <scope>REVIEW</scope>
    <scope>INDUCTION</scope>
</reference>
<reference key="15">
    <citation type="journal article" date="2005" name="Mol. Cell. Proteomics">
        <title>Quantitative phosphoproteomics applied to the yeast pheromone signaling pathway.</title>
        <authorList>
            <person name="Gruhler A."/>
            <person name="Olsen J.V."/>
            <person name="Mohammed S."/>
            <person name="Mortensen P."/>
            <person name="Faergeman N.J."/>
            <person name="Mann M."/>
            <person name="Jensen O.N."/>
        </authorList>
    </citation>
    <scope>PHOSPHORYLATION [LARGE SCALE ANALYSIS] AT SER-285</scope>
    <scope>IDENTIFICATION BY MASS SPECTROMETRY [LARGE SCALE ANALYSIS]</scope>
    <source>
        <strain>YAL6B</strain>
    </source>
</reference>
<reference key="16">
    <citation type="journal article" date="2007" name="J. Proteome Res.">
        <title>Large-scale phosphorylation analysis of alpha-factor-arrested Saccharomyces cerevisiae.</title>
        <authorList>
            <person name="Li X."/>
            <person name="Gerber S.A."/>
            <person name="Rudner A.D."/>
            <person name="Beausoleil S.A."/>
            <person name="Haas W."/>
            <person name="Villen J."/>
            <person name="Elias J.E."/>
            <person name="Gygi S.P."/>
        </authorList>
    </citation>
    <scope>PHOSPHORYLATION [LARGE SCALE ANALYSIS] AT SER-285</scope>
    <scope>IDENTIFICATION BY MASS SPECTROMETRY [LARGE SCALE ANALYSIS]</scope>
    <source>
        <strain>ADR376</strain>
    </source>
</reference>
<reference key="17">
    <citation type="journal article" date="2008" name="Mol. Cell. Proteomics">
        <title>A multidimensional chromatography technology for in-depth phosphoproteome analysis.</title>
        <authorList>
            <person name="Albuquerque C.P."/>
            <person name="Smolka M.B."/>
            <person name="Payne S.H."/>
            <person name="Bafna V."/>
            <person name="Eng J."/>
            <person name="Zhou H."/>
        </authorList>
    </citation>
    <scope>PHOSPHORYLATION [LARGE SCALE ANALYSIS] AT SER-285</scope>
    <scope>IDENTIFICATION BY MASS SPECTROMETRY [LARGE SCALE ANALYSIS]</scope>
</reference>
<reference key="18">
    <citation type="journal article" date="2009" name="Science">
        <title>Global analysis of Cdk1 substrate phosphorylation sites provides insights into evolution.</title>
        <authorList>
            <person name="Holt L.J."/>
            <person name="Tuch B.B."/>
            <person name="Villen J."/>
            <person name="Johnson A.D."/>
            <person name="Gygi S.P."/>
            <person name="Morgan D.O."/>
        </authorList>
    </citation>
    <scope>PHOSPHORYLATION [LARGE SCALE ANALYSIS] AT SER-285</scope>
    <scope>IDENTIFICATION BY MASS SPECTROMETRY [LARGE SCALE ANALYSIS]</scope>
</reference>
<organism>
    <name type="scientific">Saccharomyces cerevisiae (strain ATCC 204508 / S288c)</name>
    <name type="common">Baker's yeast</name>
    <dbReference type="NCBI Taxonomy" id="559292"/>
    <lineage>
        <taxon>Eukaryota</taxon>
        <taxon>Fungi</taxon>
        <taxon>Dikarya</taxon>
        <taxon>Ascomycota</taxon>
        <taxon>Saccharomycotina</taxon>
        <taxon>Saccharomycetes</taxon>
        <taxon>Saccharomycetales</taxon>
        <taxon>Saccharomycetaceae</taxon>
        <taxon>Saccharomyces</taxon>
    </lineage>
</organism>
<comment type="function">
    <text evidence="2 4 9 10 11">Catalyzes the dephosphorylation of diacylglycerol diphosphate (DGPP) to phosphatidate (PA) and the subsequent dephosphorylation of PA to diacylglycerol (DAG). Together with LPP1, regulates intracellular DGPP and PA levels, which are phospholipid molecules believed to play a signaling role in stress response. Can also use lysophosphatidic acid (LPA) and phosphatidylglycerophosphate as substrates. Substrate preference is DGPP &gt; LPA &gt; PA. Activity is independent of a divalent cation ion and insensitive to inhibition by N-ethylmaleimide.</text>
</comment>
<comment type="catalytic activity">
    <reaction evidence="2 9 10">
        <text>a 1,2-diacyl-sn-glycerol 3-diphosphate + H2O = a 1,2-diacyl-sn-glycero-3-phosphate + phosphate + H(+)</text>
        <dbReference type="Rhea" id="RHEA:27449"/>
        <dbReference type="ChEBI" id="CHEBI:15377"/>
        <dbReference type="ChEBI" id="CHEBI:15378"/>
        <dbReference type="ChEBI" id="CHEBI:43474"/>
        <dbReference type="ChEBI" id="CHEBI:58608"/>
        <dbReference type="ChEBI" id="CHEBI:59996"/>
        <dbReference type="EC" id="3.6.1.75"/>
    </reaction>
    <physiologicalReaction direction="left-to-right" evidence="15 16 17">
        <dbReference type="Rhea" id="RHEA:27450"/>
    </physiologicalReaction>
</comment>
<comment type="catalytic activity">
    <reaction evidence="9 10">
        <text>a 1,2-diacyl-sn-glycero-3-phosphate + H2O = a 1,2-diacyl-sn-glycerol + phosphate</text>
        <dbReference type="Rhea" id="RHEA:27429"/>
        <dbReference type="ChEBI" id="CHEBI:15377"/>
        <dbReference type="ChEBI" id="CHEBI:17815"/>
        <dbReference type="ChEBI" id="CHEBI:43474"/>
        <dbReference type="ChEBI" id="CHEBI:58608"/>
        <dbReference type="EC" id="3.1.3.4"/>
    </reaction>
    <physiologicalReaction direction="left-to-right" evidence="16 17">
        <dbReference type="Rhea" id="RHEA:27430"/>
    </physiologicalReaction>
</comment>
<comment type="catalytic activity">
    <reaction evidence="10">
        <text>a 1-acyl-sn-glycero-3-phosphate + H2O = a 1-acyl-sn-glycerol + phosphate</text>
        <dbReference type="Rhea" id="RHEA:33155"/>
        <dbReference type="ChEBI" id="CHEBI:15377"/>
        <dbReference type="ChEBI" id="CHEBI:43474"/>
        <dbReference type="ChEBI" id="CHEBI:57970"/>
        <dbReference type="ChEBI" id="CHEBI:64683"/>
        <dbReference type="EC" id="3.1.3.106"/>
    </reaction>
    <physiologicalReaction direction="left-to-right" evidence="17">
        <dbReference type="Rhea" id="RHEA:33156"/>
    </physiologicalReaction>
</comment>
<comment type="activity regulation">
    <text evidence="4 9">Inhibited by sodium fluoride (NaF) and pyrophosphate. Strongly inhibited by manganese ion and, to a lower extent, by magnesium and calcium ions. Also inhibited by Cu(2+) ion. In an indirect manner, it is also inhibited by the zinc ion which is able to form a complex with DGPP and prevent the enzyme from removing the phosphate from the substrate. Not inhibited by N-ethylmaleimide.</text>
</comment>
<comment type="biophysicochemical properties">
    <kinetics>
        <Vmax evidence="10">167.0 umol/min/mg enzyme with lysophosphatidic acid as substrate</Vmax>
    </kinetics>
    <phDependence>
        <text evidence="2 10">Optimum pH is 6.0-8.5 (PubMed:8940025). Optimum pH for geranylgeranyl-P-P phosphatase reaction is 5.0-5.5 (PubMed:10329682).</text>
    </phDependence>
</comment>
<comment type="interaction">
    <interactant intactId="EBI-2054360">
        <id>Q05521</id>
    </interactant>
    <interactant intactId="EBI-2054360">
        <id>Q05521</id>
        <label>DPP1</label>
    </interactant>
    <organismsDiffer>false</organismsDiffer>
    <experiments>3</experiments>
</comment>
<comment type="subcellular location">
    <subcellularLocation>
        <location evidence="4 6 9">Vacuole membrane</location>
        <topology evidence="4 6 9">Multi-pass membrane protein</topology>
    </subcellularLocation>
</comment>
<comment type="induction">
    <text evidence="4 5 8">Induced by the transcription factor ZAP1 during zinc depletion and negatively regulated by the transcription factor GIS1 predominantly during nutrient limitation. Induced by inositol supplementation.</text>
</comment>
<comment type="domain">
    <text>The phosphatase sequence motif I (including Arg-125) and II (including His-169) are part of the cytoplasmic loop 2 and phosphatase sequence motif III (including His-223) is part of the cytoplasmic loop 3.</text>
</comment>
<comment type="miscellaneous">
    <text evidence="7">Present with 3038 molecules/cell in log phase SD medium.</text>
</comment>
<comment type="similarity">
    <text evidence="14">Belongs to the PA-phosphatase related phosphoesterase family.</text>
</comment>
<gene>
    <name type="primary">DPP1</name>
    <name type="synonym">ZRG1</name>
    <name type="ordered locus">YDR284C</name>
</gene>
<sequence length="289" mass="33514">MNRVSFIKTPFNIGAKWRLEDVFLLIIMILLNYPVYYQQPFERQFYINDLTISHPYATTERVNNNMLFVYSFVVPSLTILIIGSILADRRHLIFILYTSLLGLSLAWFSTSFFTNFIKNWIGRLRPDFLDRCQPVEGLPLDTLFTAKDVCTTKNHERLLDGFRTTPSGHSSESFAGLGYLYFWLCGQLLTESPLMPLWRKMVAFLPLLGAALIALSRTQDYRHHFVDVILGSMLGYIMAHFFYRRIFPPIDDPLPFKPLMDDSDVTLEEAVTHQRIPDEELHPLSDEGM</sequence>
<dbReference type="EC" id="3.6.1.75"/>
<dbReference type="EC" id="3.1.3.106"/>
<dbReference type="EC" id="3.1.3.4"/>
<dbReference type="EMBL" id="U51031">
    <property type="protein sequence ID" value="AAB64475.1"/>
    <property type="molecule type" value="Genomic_DNA"/>
</dbReference>
<dbReference type="EMBL" id="AY557744">
    <property type="protein sequence ID" value="AAS56070.1"/>
    <property type="molecule type" value="Genomic_DNA"/>
</dbReference>
<dbReference type="EMBL" id="BK006938">
    <property type="protein sequence ID" value="DAA12124.1"/>
    <property type="molecule type" value="Genomic_DNA"/>
</dbReference>
<dbReference type="PIR" id="S70114">
    <property type="entry name" value="S70114"/>
</dbReference>
<dbReference type="RefSeq" id="NP_010570.1">
    <property type="nucleotide sequence ID" value="NM_001180592.1"/>
</dbReference>
<dbReference type="SMR" id="Q05521"/>
<dbReference type="BioGRID" id="32337">
    <property type="interactions" value="66"/>
</dbReference>
<dbReference type="DIP" id="DIP-8807N"/>
<dbReference type="FunCoup" id="Q05521">
    <property type="interactions" value="303"/>
</dbReference>
<dbReference type="IntAct" id="Q05521">
    <property type="interactions" value="11"/>
</dbReference>
<dbReference type="MINT" id="Q05521"/>
<dbReference type="STRING" id="4932.YDR284C"/>
<dbReference type="SwissLipids" id="SLP:000000057"/>
<dbReference type="TCDB" id="9.B.105.3.2">
    <property type="family name" value="the lead resistance fusion protein (pbrbc) family"/>
</dbReference>
<dbReference type="iPTMnet" id="Q05521"/>
<dbReference type="PaxDb" id="4932-YDR284C"/>
<dbReference type="PeptideAtlas" id="Q05521"/>
<dbReference type="TopDownProteomics" id="Q05521"/>
<dbReference type="DNASU" id="851878"/>
<dbReference type="EnsemblFungi" id="YDR284C_mRNA">
    <property type="protein sequence ID" value="YDR284C"/>
    <property type="gene ID" value="YDR284C"/>
</dbReference>
<dbReference type="GeneID" id="851878"/>
<dbReference type="KEGG" id="sce:YDR284C"/>
<dbReference type="AGR" id="SGD:S000002692"/>
<dbReference type="SGD" id="S000002692">
    <property type="gene designation" value="DPP1"/>
</dbReference>
<dbReference type="VEuPathDB" id="FungiDB:YDR284C"/>
<dbReference type="eggNOG" id="KOG3030">
    <property type="taxonomic scope" value="Eukaryota"/>
</dbReference>
<dbReference type="GeneTree" id="ENSGT00940000174574"/>
<dbReference type="HOGENOM" id="CLU_021458_6_1_1"/>
<dbReference type="InParanoid" id="Q05521"/>
<dbReference type="OMA" id="WFSYRRY"/>
<dbReference type="OrthoDB" id="10030083at2759"/>
<dbReference type="BioCyc" id="MetaCyc:YDR284C-MONOMER"/>
<dbReference type="BioCyc" id="YEAST:YDR284C-MONOMER"/>
<dbReference type="BRENDA" id="3.1.3.81">
    <property type="organism ID" value="984"/>
</dbReference>
<dbReference type="Reactome" id="R-SCE-2029485">
    <property type="pathway name" value="Role of phospholipids in phagocytosis"/>
</dbReference>
<dbReference type="Reactome" id="R-SCE-419408">
    <property type="pathway name" value="Lysosphingolipid and LPA receptors"/>
</dbReference>
<dbReference type="Reactome" id="R-SCE-9845614">
    <property type="pathway name" value="Sphingolipid catabolism"/>
</dbReference>
<dbReference type="BioGRID-ORCS" id="851878">
    <property type="hits" value="2 hits in 10 CRISPR screens"/>
</dbReference>
<dbReference type="PRO" id="PR:Q05521"/>
<dbReference type="Proteomes" id="UP000002311">
    <property type="component" value="Chromosome IV"/>
</dbReference>
<dbReference type="RNAct" id="Q05521">
    <property type="molecule type" value="protein"/>
</dbReference>
<dbReference type="GO" id="GO:0000329">
    <property type="term" value="C:fungal-type vacuole membrane"/>
    <property type="evidence" value="ECO:0000314"/>
    <property type="project" value="SGD"/>
</dbReference>
<dbReference type="GO" id="GO:0016020">
    <property type="term" value="C:membrane"/>
    <property type="evidence" value="ECO:0000318"/>
    <property type="project" value="GO_Central"/>
</dbReference>
<dbReference type="GO" id="GO:0045121">
    <property type="term" value="C:membrane raft"/>
    <property type="evidence" value="ECO:0000314"/>
    <property type="project" value="SGD"/>
</dbReference>
<dbReference type="GO" id="GO:0000810">
    <property type="term" value="F:diacylglycerol diphosphate phosphatase activity"/>
    <property type="evidence" value="ECO:0000314"/>
    <property type="project" value="SGD"/>
</dbReference>
<dbReference type="GO" id="GO:0042802">
    <property type="term" value="F:identical protein binding"/>
    <property type="evidence" value="ECO:0000353"/>
    <property type="project" value="IntAct"/>
</dbReference>
<dbReference type="GO" id="GO:0052642">
    <property type="term" value="F:lysophosphatidic acid phosphatase activity"/>
    <property type="evidence" value="ECO:0007669"/>
    <property type="project" value="RHEA"/>
</dbReference>
<dbReference type="GO" id="GO:0008195">
    <property type="term" value="F:phosphatidate phosphatase activity"/>
    <property type="evidence" value="ECO:0000314"/>
    <property type="project" value="SGD"/>
</dbReference>
<dbReference type="GO" id="GO:0046839">
    <property type="term" value="P:phospholipid dephosphorylation"/>
    <property type="evidence" value="ECO:0000318"/>
    <property type="project" value="GO_Central"/>
</dbReference>
<dbReference type="GO" id="GO:0006644">
    <property type="term" value="P:phospholipid metabolic process"/>
    <property type="evidence" value="ECO:0000315"/>
    <property type="project" value="SGD"/>
</dbReference>
<dbReference type="CDD" id="cd03390">
    <property type="entry name" value="PAP2_containing_1_like"/>
    <property type="match status" value="1"/>
</dbReference>
<dbReference type="FunFam" id="1.20.144.10:FF:000017">
    <property type="entry name" value="Diacylglycerol pyrophosphate phosphatase 1"/>
    <property type="match status" value="1"/>
</dbReference>
<dbReference type="Gene3D" id="1.20.144.10">
    <property type="entry name" value="Phosphatidic acid phosphatase type 2/haloperoxidase"/>
    <property type="match status" value="1"/>
</dbReference>
<dbReference type="InterPro" id="IPR036938">
    <property type="entry name" value="P_Acid_Pase_2/haloperoxi_sf"/>
</dbReference>
<dbReference type="InterPro" id="IPR000326">
    <property type="entry name" value="P_Acid_Pase_2/haloperoxidase"/>
</dbReference>
<dbReference type="InterPro" id="IPR043216">
    <property type="entry name" value="PA_PP_rel"/>
</dbReference>
<dbReference type="PANTHER" id="PTHR10165">
    <property type="entry name" value="LIPID PHOSPHATE PHOSPHATASE"/>
    <property type="match status" value="1"/>
</dbReference>
<dbReference type="PANTHER" id="PTHR10165:SF35">
    <property type="entry name" value="RE23632P"/>
    <property type="match status" value="1"/>
</dbReference>
<dbReference type="Pfam" id="PF01569">
    <property type="entry name" value="PAP2"/>
    <property type="match status" value="1"/>
</dbReference>
<dbReference type="SMART" id="SM00014">
    <property type="entry name" value="acidPPc"/>
    <property type="match status" value="1"/>
</dbReference>
<dbReference type="SUPFAM" id="SSF48317">
    <property type="entry name" value="Acid phosphatase/Vanadium-dependent haloperoxidase"/>
    <property type="match status" value="1"/>
</dbReference>
<name>DPP1_YEAST</name>
<protein>
    <recommendedName>
        <fullName evidence="12 13">Diacylglycerol pyrophosphate phosphatase 1</fullName>
        <shortName>DGPP phosphatase</shortName>
        <ecNumber>3.6.1.75</ecNumber>
    </recommendedName>
    <alternativeName>
        <fullName>Lysophosphatidate phosphatase</fullName>
        <ecNumber>3.1.3.106</ecNumber>
    </alternativeName>
    <alternativeName>
        <fullName>Phosphatidate phosphatase</fullName>
        <ecNumber>3.1.3.4</ecNumber>
    </alternativeName>
</protein>
<accession>Q05521</accession>
<accession>D6VSR4</accession>
<proteinExistence type="evidence at protein level"/>